<keyword id="KW-0965">Cell junction</keyword>
<keyword id="KW-0134">Cell wall</keyword>
<keyword id="KW-0961">Cell wall biogenesis/degradation</keyword>
<keyword id="KW-0135">Cellulose biosynthesis</keyword>
<keyword id="KW-0903">Direct protein sequencing</keyword>
<keyword id="KW-0325">Glycoprotein</keyword>
<keyword id="KW-0333">Golgi apparatus</keyword>
<keyword id="KW-0413">Isomerase</keyword>
<keyword id="KW-1185">Reference proteome</keyword>
<keyword id="KW-0964">Secreted</keyword>
<comment type="function">
    <text evidence="2 3 8">Probable UDP-L-arabinose mutase involved in the biosynthesis of cell wall non-cellulosic polysaccharides (By similarity). Was initially shown to possess an autoglycosylating activity which is dependent on the presence of UDP-glucose and manganese (Probable) (PubMed:10580281).</text>
</comment>
<comment type="catalytic activity">
    <reaction evidence="2">
        <text>UDP-beta-L-arabinofuranose = UDP-beta-L-arabinopyranose</text>
        <dbReference type="Rhea" id="RHEA:28350"/>
        <dbReference type="ChEBI" id="CHEBI:61457"/>
        <dbReference type="ChEBI" id="CHEBI:61463"/>
        <dbReference type="EC" id="5.4.99.30"/>
    </reaction>
</comment>
<comment type="cofactor">
    <cofactor evidence="2">
        <name>Mn(2+)</name>
        <dbReference type="ChEBI" id="CHEBI:29035"/>
    </cofactor>
    <cofactor evidence="2">
        <name>Mg(2+)</name>
        <dbReference type="ChEBI" id="CHEBI:18420"/>
    </cofactor>
</comment>
<comment type="subunit">
    <text evidence="5">Homopentamer or homohexamer.</text>
</comment>
<comment type="subcellular location">
    <subcellularLocation>
        <location evidence="1">Secreted</location>
        <location evidence="1">Cell wall</location>
    </subcellularLocation>
    <subcellularLocation>
        <location evidence="1">Cell junction</location>
        <location evidence="1">Plasmodesma</location>
    </subcellularLocation>
    <subcellularLocation>
        <location evidence="1">Golgi apparatus</location>
    </subcellularLocation>
    <text evidence="1">Cell wall-associated, with highest concentrations on plasmodesmata. Also located in the Golgi apparatus (By similarity).</text>
</comment>
<comment type="tissue specificity">
    <text evidence="3">Expressed in all tissues tested, including root, tuber, leaf, petiole, shoot, stolon and stem.</text>
</comment>
<comment type="domain">
    <text evidence="2">The conserved DXD motif is involved in enzyme activity.</text>
</comment>
<comment type="PTM">
    <text evidence="3 4 5">Reversibly glycosylated by UDP-glucose, UDP-xylose and UDP-galactose, but not UDP-mannose.</text>
</comment>
<comment type="similarity">
    <text evidence="7">Belongs to the RGP family.</text>
</comment>
<reference key="1">
    <citation type="journal article" date="1999" name="Plant Physiol. Biochem.">
        <title>Molecular cloning and characterization of the enzyme UDP-glucose:protein transglucosylase from potato.</title>
        <authorList>
            <person name="Bocca S.N."/>
            <person name="Kissen R."/>
            <person name="Rojas-Beltran J.A."/>
            <person name="Noel F."/>
            <person name="Gebhardt C."/>
            <person name="Moreno S."/>
            <person name="du Jardin P."/>
            <person name="Tandecarz J.S."/>
        </authorList>
    </citation>
    <scope>NUCLEOTIDE SEQUENCE [MRNA]</scope>
    <scope>PROTEIN SEQUENCE OF 99-113</scope>
    <scope>FUNCTION</scope>
    <scope>GLYCOSYLATION</scope>
    <scope>TISSUE SPECIFICITY</scope>
    <source>
        <tissue evidence="3">Stolon tip</tissue>
    </source>
</reference>
<reference key="2">
    <citation type="journal article" date="1986" name="Eur. J. Biochem.">
        <title>Alpha-glucan synthesis on a protein primer, uridine diphosphoglucose: protein transglucosylase I. Separation from starch synthetase and phosphorylase and a study of its properties.</title>
        <authorList>
            <person name="Moreno S."/>
            <person name="Cardini C.E."/>
            <person name="Tandecarz J.S."/>
        </authorList>
    </citation>
    <scope>FUNCTION</scope>
</reference>
<reference key="3">
    <citation type="journal article" date="1992" name="Plant Physiol.">
        <title>Potato tuber UDP-glucose:protein transglucosylase catalyzes its own glucosylation.</title>
        <authorList>
            <person name="Ardila F.J."/>
            <person name="Tandecarz J.S."/>
        </authorList>
    </citation>
    <scope>GLYCOSYLATION</scope>
</reference>
<reference key="4">
    <citation type="journal article" date="1997" name="Plant Physiol. Biochem.">
        <title>Initiation of starch biosynthesis: purification and characterization of UDP-glucose:protein transglucosylase from potato tubers.</title>
        <authorList>
            <person name="Bocca S.N."/>
            <person name="Rothschild A."/>
            <person name="Tandecarz J.S."/>
        </authorList>
    </citation>
    <scope>GLYCOSYLATION</scope>
    <scope>SUBUNIT</scope>
</reference>
<name>RGP2_SOLTU</name>
<feature type="chain" id="PRO_0000221196" description="Probable UDP-arabinopyranose mutase 2">
    <location>
        <begin position="1"/>
        <end position="366"/>
    </location>
</feature>
<feature type="short sequence motif" description="DXD motif" evidence="2">
    <location>
        <begin position="104"/>
        <end position="106"/>
    </location>
</feature>
<feature type="site" description="Required for activity" evidence="2">
    <location>
        <position position="152"/>
    </location>
</feature>
<feature type="site" description="Required for activity" evidence="2">
    <location>
        <position position="159"/>
    </location>
</feature>
<feature type="glycosylation site" description="N-linked (Glc...) arginine" evidence="1">
    <location>
        <position position="152"/>
    </location>
</feature>
<sequence length="366" mass="41603">MAGSSVTPTPLLKDELDIVIPTIRNLDFLEMWRPFFQPYHLIIVQDGDPSKIINVPEGFDYELYNRNDINRILGPKASCISFKDSACRCFGYMVSKKKYIYTIDDDCFVAKDPSGKDINALEQHIKNLLCPSTPHFFNTLYDPYREGADFVRGYPFSMREGAATAVSHGLWLNIPDYDAPTQLVKPRERNTRYVDAVMTIPKGTLFPMCGMNLAFDRELIGPAMYFGLMGDGQPIGRYDDMWAGWCIKVICDHLGLGVKTGLPYIWHSKASNPFVNLKKEYKGIYWQEEIIPFSQSATLPKDCTSVQQCYLELSKQVKEKLSTIDPYFTKLADAMVTWIEAWDELNPTGEGLAKLPSRTAPESRLH</sequence>
<organism evidence="9">
    <name type="scientific">Solanum tuberosum</name>
    <name type="common">Potato</name>
    <dbReference type="NCBI Taxonomy" id="4113"/>
    <lineage>
        <taxon>Eukaryota</taxon>
        <taxon>Viridiplantae</taxon>
        <taxon>Streptophyta</taxon>
        <taxon>Embryophyta</taxon>
        <taxon>Tracheophyta</taxon>
        <taxon>Spermatophyta</taxon>
        <taxon>Magnoliopsida</taxon>
        <taxon>eudicotyledons</taxon>
        <taxon>Gunneridae</taxon>
        <taxon>Pentapetalae</taxon>
        <taxon>asterids</taxon>
        <taxon>lamiids</taxon>
        <taxon>Solanales</taxon>
        <taxon>Solanaceae</taxon>
        <taxon>Solanoideae</taxon>
        <taxon>Solaneae</taxon>
        <taxon>Solanum</taxon>
    </lineage>
</organism>
<gene>
    <name evidence="6" type="primary">UPTG2</name>
</gene>
<proteinExistence type="evidence at protein level"/>
<dbReference type="EC" id="5.4.99.30" evidence="2"/>
<dbReference type="EMBL" id="AJ310910">
    <property type="protein sequence ID" value="CAC84517.1"/>
    <property type="molecule type" value="mRNA"/>
</dbReference>
<dbReference type="SMR" id="Q8RU27"/>
<dbReference type="FunCoup" id="Q8RU27">
    <property type="interactions" value="1825"/>
</dbReference>
<dbReference type="STRING" id="4113.Q8RU27"/>
<dbReference type="CAZy" id="GT75">
    <property type="family name" value="Glycosyltransferase Family 75"/>
</dbReference>
<dbReference type="GlyCosmos" id="Q8RU27">
    <property type="glycosylation" value="1 site, No reported glycans"/>
</dbReference>
<dbReference type="PaxDb" id="4113-PGSC0003DMT400004878"/>
<dbReference type="eggNOG" id="ENOG502QSDP">
    <property type="taxonomic scope" value="Eukaryota"/>
</dbReference>
<dbReference type="InParanoid" id="Q8RU27"/>
<dbReference type="Proteomes" id="UP000011115">
    <property type="component" value="Unassembled WGS sequence"/>
</dbReference>
<dbReference type="ExpressionAtlas" id="Q8RU27">
    <property type="expression patterns" value="baseline"/>
</dbReference>
<dbReference type="GO" id="GO:0005829">
    <property type="term" value="C:cytosol"/>
    <property type="evidence" value="ECO:0000318"/>
    <property type="project" value="GO_Central"/>
</dbReference>
<dbReference type="GO" id="GO:0005576">
    <property type="term" value="C:extracellular region"/>
    <property type="evidence" value="ECO:0007669"/>
    <property type="project" value="UniProtKB-KW"/>
</dbReference>
<dbReference type="GO" id="GO:0005794">
    <property type="term" value="C:Golgi apparatus"/>
    <property type="evidence" value="ECO:0000318"/>
    <property type="project" value="GO_Central"/>
</dbReference>
<dbReference type="GO" id="GO:0009506">
    <property type="term" value="C:plasmodesma"/>
    <property type="evidence" value="ECO:0007669"/>
    <property type="project" value="UniProtKB-SubCell"/>
</dbReference>
<dbReference type="GO" id="GO:0052691">
    <property type="term" value="F:UDP-arabinopyranose mutase activity"/>
    <property type="evidence" value="ECO:0000318"/>
    <property type="project" value="GO_Central"/>
</dbReference>
<dbReference type="GO" id="GO:0071555">
    <property type="term" value="P:cell wall organization"/>
    <property type="evidence" value="ECO:0007669"/>
    <property type="project" value="UniProtKB-KW"/>
</dbReference>
<dbReference type="GO" id="GO:0030244">
    <property type="term" value="P:cellulose biosynthetic process"/>
    <property type="evidence" value="ECO:0007669"/>
    <property type="project" value="UniProtKB-KW"/>
</dbReference>
<dbReference type="GO" id="GO:0071669">
    <property type="term" value="P:plant-type cell wall organization or biogenesis"/>
    <property type="evidence" value="ECO:0000318"/>
    <property type="project" value="GO_Central"/>
</dbReference>
<dbReference type="GO" id="GO:0006486">
    <property type="term" value="P:protein glycosylation"/>
    <property type="evidence" value="ECO:0000314"/>
    <property type="project" value="UniProtKB"/>
</dbReference>
<dbReference type="GO" id="GO:0033356">
    <property type="term" value="P:UDP-L-arabinose metabolic process"/>
    <property type="evidence" value="ECO:0000318"/>
    <property type="project" value="GO_Central"/>
</dbReference>
<dbReference type="InterPro" id="IPR029044">
    <property type="entry name" value="Nucleotide-diphossugar_trans"/>
</dbReference>
<dbReference type="InterPro" id="IPR004901">
    <property type="entry name" value="RGP"/>
</dbReference>
<dbReference type="InterPro" id="IPR037595">
    <property type="entry name" value="RGP_fam"/>
</dbReference>
<dbReference type="PANTHER" id="PTHR31682:SF46">
    <property type="entry name" value="UDP-ARABINOPYRANOSE MUTASE 1"/>
    <property type="match status" value="1"/>
</dbReference>
<dbReference type="PANTHER" id="PTHR31682">
    <property type="entry name" value="UDP-ARABINOSE MUTASE"/>
    <property type="match status" value="1"/>
</dbReference>
<dbReference type="Pfam" id="PF03214">
    <property type="entry name" value="RGP"/>
    <property type="match status" value="1"/>
</dbReference>
<dbReference type="PIRSF" id="PIRSF016429">
    <property type="entry name" value="UPTG"/>
    <property type="match status" value="1"/>
</dbReference>
<dbReference type="SUPFAM" id="SSF53448">
    <property type="entry name" value="Nucleotide-diphospho-sugar transferases"/>
    <property type="match status" value="1"/>
</dbReference>
<accession>Q8RU27</accession>
<evidence type="ECO:0000250" key="1">
    <source>
        <dbReference type="UniProtKB" id="P80607"/>
    </source>
</evidence>
<evidence type="ECO:0000250" key="2">
    <source>
        <dbReference type="UniProtKB" id="Q8H8T0"/>
    </source>
</evidence>
<evidence type="ECO:0000269" key="3">
    <source>
    </source>
</evidence>
<evidence type="ECO:0000269" key="4">
    <source>
    </source>
</evidence>
<evidence type="ECO:0000269" key="5">
    <source ref="4"/>
</evidence>
<evidence type="ECO:0000303" key="6">
    <source>
    </source>
</evidence>
<evidence type="ECO:0000305" key="7"/>
<evidence type="ECO:0000305" key="8">
    <source>
    </source>
</evidence>
<evidence type="ECO:0000312" key="9">
    <source>
        <dbReference type="EMBL" id="CAC84517.1"/>
    </source>
</evidence>
<protein>
    <recommendedName>
        <fullName evidence="7">Probable UDP-arabinopyranose mutase 2</fullName>
        <ecNumber evidence="2">5.4.99.30</ecNumber>
    </recommendedName>
    <alternativeName>
        <fullName evidence="6">Reversibly glycosylated polypeptide 2</fullName>
        <shortName evidence="6">RGP2</shortName>
    </alternativeName>
    <alternativeName>
        <fullName evidence="7">UDP-L-arabinose mutase 2</fullName>
    </alternativeName>
    <alternativeName>
        <fullName evidence="6">UDP-glucose:protein transglucosylase 2</fullName>
        <shortName evidence="6">UPTG 2</shortName>
    </alternativeName>
</protein>